<proteinExistence type="inferred from homology"/>
<evidence type="ECO:0000250" key="1"/>
<evidence type="ECO:0000255" key="2">
    <source>
        <dbReference type="PROSITE-ProRule" id="PRU00159"/>
    </source>
</evidence>
<evidence type="ECO:0000255" key="3">
    <source>
        <dbReference type="PROSITE-ProRule" id="PRU10028"/>
    </source>
</evidence>
<organism>
    <name type="scientific">Saimiriine herpesvirus 2 (strain 11)</name>
    <name type="common">SaHV-2</name>
    <name type="synonym">Herpesvirus saimiri</name>
    <dbReference type="NCBI Taxonomy" id="10383"/>
    <lineage>
        <taxon>Viruses</taxon>
        <taxon>Duplodnaviria</taxon>
        <taxon>Heunggongvirae</taxon>
        <taxon>Peploviricota</taxon>
        <taxon>Herviviricetes</taxon>
        <taxon>Herpesvirales</taxon>
        <taxon>Orthoherpesviridae</taxon>
        <taxon>Gammaherpesvirinae</taxon>
        <taxon>Rhadinovirus</taxon>
        <taxon>Rhadinovirus saimiriinegamma2</taxon>
        <taxon>Saimiriine herpesvirus 2</taxon>
    </lineage>
</organism>
<gene>
    <name type="primary">36</name>
</gene>
<dbReference type="EC" id="2.7.1.-"/>
<dbReference type="EMBL" id="X64346">
    <property type="protein sequence ID" value="CAA45659.1"/>
    <property type="molecule type" value="Genomic_DNA"/>
</dbReference>
<dbReference type="RefSeq" id="NP_040238.1">
    <property type="nucleotide sequence ID" value="NC_001350.1"/>
</dbReference>
<dbReference type="KEGG" id="vg:1682483"/>
<dbReference type="Proteomes" id="UP000000587">
    <property type="component" value="Segment"/>
</dbReference>
<dbReference type="GO" id="GO:0005524">
    <property type="term" value="F:ATP binding"/>
    <property type="evidence" value="ECO:0007669"/>
    <property type="project" value="UniProtKB-KW"/>
</dbReference>
<dbReference type="GO" id="GO:0004713">
    <property type="term" value="F:protein tyrosine kinase activity"/>
    <property type="evidence" value="ECO:0007669"/>
    <property type="project" value="UniProtKB-KW"/>
</dbReference>
<dbReference type="Gene3D" id="1.10.510.10">
    <property type="entry name" value="Transferase(Phosphotransferase) domain 1"/>
    <property type="match status" value="1"/>
</dbReference>
<dbReference type="InterPro" id="IPR011009">
    <property type="entry name" value="Kinase-like_dom_sf"/>
</dbReference>
<dbReference type="InterPro" id="IPR000719">
    <property type="entry name" value="Prot_kinase_dom"/>
</dbReference>
<dbReference type="InterPro" id="IPR008266">
    <property type="entry name" value="Tyr_kinase_AS"/>
</dbReference>
<dbReference type="SMART" id="SM00220">
    <property type="entry name" value="S_TKc"/>
    <property type="match status" value="1"/>
</dbReference>
<dbReference type="SUPFAM" id="SSF56112">
    <property type="entry name" value="Protein kinase-like (PK-like)"/>
    <property type="match status" value="1"/>
</dbReference>
<dbReference type="PROSITE" id="PS50011">
    <property type="entry name" value="PROTEIN_KINASE_DOM"/>
    <property type="match status" value="1"/>
</dbReference>
<dbReference type="PROSITE" id="PS00109">
    <property type="entry name" value="PROTEIN_KINASE_TYR"/>
    <property type="match status" value="1"/>
</dbReference>
<name>GCVK_SHV21</name>
<feature type="chain" id="PRO_0000088197" description="Probable ganciclovir kinase">
    <location>
        <begin position="1"/>
        <end position="431"/>
    </location>
</feature>
<feature type="domain" description="Protein kinase" evidence="2">
    <location>
        <begin position="79"/>
        <end position="368"/>
    </location>
</feature>
<feature type="active site" description="Proton acceptor" evidence="2 3">
    <location>
        <position position="195"/>
    </location>
</feature>
<feature type="binding site" evidence="2">
    <location>
        <begin position="85"/>
        <end position="93"/>
    </location>
    <ligand>
        <name>ATP</name>
        <dbReference type="ChEBI" id="CHEBI:30616"/>
    </ligand>
</feature>
<feature type="binding site" evidence="2">
    <location>
        <position position="103"/>
    </location>
    <ligand>
        <name>ATP</name>
        <dbReference type="ChEBI" id="CHEBI:30616"/>
    </ligand>
</feature>
<comment type="function">
    <text evidence="1">Phosphorylates the antiviral nucleoside analog ganciclovir.</text>
</comment>
<comment type="similarity">
    <text evidence="2">Belongs to the protein kinase superfamily. Tyr protein kinase family. HCMV ganciclovir subfamily.</text>
</comment>
<keyword id="KW-0067">ATP-binding</keyword>
<keyword id="KW-0418">Kinase</keyword>
<keyword id="KW-0547">Nucleotide-binding</keyword>
<keyword id="KW-1185">Reference proteome</keyword>
<keyword id="KW-0808">Transferase</keyword>
<keyword id="KW-0829">Tyrosine-protein kinase</keyword>
<reference key="1">
    <citation type="journal article" date="1992" name="J. Virol.">
        <title>Primary structure of the herpesvirus saimiri genome.</title>
        <authorList>
            <person name="Albrecht J.-C."/>
            <person name="Nicholas J."/>
            <person name="Biller D."/>
            <person name="Cameron K.R."/>
            <person name="Biesinger B."/>
            <person name="Newman C."/>
            <person name="Wittmann S."/>
            <person name="Craxton M.A."/>
            <person name="Coleman H."/>
            <person name="Fleckenstein B."/>
            <person name="Honess R.W."/>
        </authorList>
    </citation>
    <scope>NUCLEOTIDE SEQUENCE [LARGE SCALE GENOMIC DNA]</scope>
</reference>
<protein>
    <recommendedName>
        <fullName>Probable ganciclovir kinase</fullName>
        <ecNumber>2.7.1.-</ecNumber>
    </recommendedName>
</protein>
<accession>Q01015</accession>
<sequence>MASPHPRKKRIVQKLPSLTQSCNGELRPCPECLQPHFSKIPILSQLITEHKFMCVSEISAHKVVFKLPKSWFQCEHLKPQEDAVLGSGSFGSVKPISKVTCAKYFTDPVDFYHELIACNLAALAQIRNSTRAIYLVRMTGAYIPCKCILFPRYAGSLYDFKCWDKISAKKLAKEFKSLVNAVNFLNDEVGIIHSDISTSNILVAHGPDFPGTFLLADLGVASLHSGNHQTELCVKNSRGKILYNMSCTRDIFLLCKDPVKPAQVIFRCYLLACKLINSETLHQTFIVGKILAQNIDMASLFYTMLECVEKMLDTKDIKPSREFYNKIGPDDESHKAYFLQFLVPRVVLLEMLSRLWDTKLSIGIDSFGNTTEKNVLEVQDKILFASWCTHLKGFLHKGGLQLNLNKLRAQPLYELVRFFLKFDYFSLSGRQ</sequence>
<organismHost>
    <name type="scientific">Saimiri sciureus</name>
    <name type="common">Common squirrel monkey</name>
    <dbReference type="NCBI Taxonomy" id="9521"/>
</organismHost>